<name>MTND_DICDI</name>
<comment type="function">
    <text evidence="1">Catalyzes 2 different reactions between oxygen and the acireductone 1,2-dihydroxy-3-keto-5-methylthiopentene (DHK-MTPene) depending upon the metal bound in the active site. Fe-containing acireductone dioxygenase (Fe-ARD) produces formate and 2-keto-4-methylthiobutyrate (KMTB), the alpha-ketoacid precursor of methionine in the methionine recycle pathway. Ni-containing acireductone dioxygenase (Ni-ARD) produces methylthiopropionate, carbon monoxide and formate, and does not lie on the methionine recycle pathway.</text>
</comment>
<comment type="catalytic activity">
    <reaction evidence="1">
        <text>1,2-dihydroxy-5-(methylsulfanyl)pent-1-en-3-one + O2 = 4-methylsulfanyl-2-oxobutanoate + formate + 2 H(+)</text>
        <dbReference type="Rhea" id="RHEA:24504"/>
        <dbReference type="ChEBI" id="CHEBI:15378"/>
        <dbReference type="ChEBI" id="CHEBI:15379"/>
        <dbReference type="ChEBI" id="CHEBI:15740"/>
        <dbReference type="ChEBI" id="CHEBI:16723"/>
        <dbReference type="ChEBI" id="CHEBI:49252"/>
        <dbReference type="EC" id="1.13.11.54"/>
    </reaction>
</comment>
<comment type="catalytic activity">
    <reaction evidence="1">
        <text>1,2-dihydroxy-5-(methylsulfanyl)pent-1-en-3-one + O2 = 3-(methylsulfanyl)propanoate + CO + formate + 2 H(+)</text>
        <dbReference type="Rhea" id="RHEA:14161"/>
        <dbReference type="ChEBI" id="CHEBI:15378"/>
        <dbReference type="ChEBI" id="CHEBI:15379"/>
        <dbReference type="ChEBI" id="CHEBI:15740"/>
        <dbReference type="ChEBI" id="CHEBI:17245"/>
        <dbReference type="ChEBI" id="CHEBI:49016"/>
        <dbReference type="ChEBI" id="CHEBI:49252"/>
        <dbReference type="EC" id="1.13.11.53"/>
    </reaction>
</comment>
<comment type="cofactor">
    <cofactor evidence="1">
        <name>Fe(2+)</name>
        <dbReference type="ChEBI" id="CHEBI:29033"/>
    </cofactor>
    <cofactor evidence="1">
        <name>Ni(2+)</name>
        <dbReference type="ChEBI" id="CHEBI:49786"/>
    </cofactor>
    <text evidence="1">Binds either 1 Fe or Ni cation per monomer. Iron-binding promotes an acireductone dioxygenase reaction producing 2-keto-4-methylthiobutyrate, while nickel-binding promotes an acireductone dioxygenase reaction producing 3-(methylsulfanyl)propanoate.</text>
</comment>
<comment type="pathway">
    <text evidence="1">Amino-acid biosynthesis; L-methionine biosynthesis via salvage pathway; L-methionine from S-methyl-5-thio-alpha-D-ribose 1-phosphate: step 5/6.</text>
</comment>
<comment type="subcellular location">
    <subcellularLocation>
        <location evidence="1">Cytoplasm</location>
    </subcellularLocation>
    <subcellularLocation>
        <location evidence="1">Nucleus</location>
    </subcellularLocation>
</comment>
<comment type="similarity">
    <text evidence="1">Belongs to the acireductone dioxygenase (ARD) family.</text>
</comment>
<accession>Q54ER6</accession>
<keyword id="KW-0028">Amino-acid biosynthesis</keyword>
<keyword id="KW-0963">Cytoplasm</keyword>
<keyword id="KW-0223">Dioxygenase</keyword>
<keyword id="KW-0408">Iron</keyword>
<keyword id="KW-0479">Metal-binding</keyword>
<keyword id="KW-0486">Methionine biosynthesis</keyword>
<keyword id="KW-0533">Nickel</keyword>
<keyword id="KW-0539">Nucleus</keyword>
<keyword id="KW-0560">Oxidoreductase</keyword>
<keyword id="KW-1185">Reference proteome</keyword>
<gene>
    <name type="primary">adi1</name>
    <name type="ORF">DDB_G0291376</name>
</gene>
<sequence length="147" mass="17815">MKSYFYDNESDVISLDYLKEHNVLYFPMDREKENYKEPLETLCKERGYKNRDEVKLSKETPGLEDKLKIFFEEHLHDDEEIRFILDGCGFFDIRDKNDKWVKIKEKKGDLIIVPANMYHRFALDESRNIHAMRLFTDAPKWVPINRY</sequence>
<evidence type="ECO:0000255" key="1">
    <source>
        <dbReference type="HAMAP-Rule" id="MF_03154"/>
    </source>
</evidence>
<feature type="chain" id="PRO_0000328196" description="Acireductone dioxygenase">
    <location>
        <begin position="1"/>
        <end position="147"/>
    </location>
</feature>
<feature type="binding site" evidence="1">
    <location>
        <position position="74"/>
    </location>
    <ligand>
        <name>Fe(2+)</name>
        <dbReference type="ChEBI" id="CHEBI:29033"/>
        <note>for iron-dependent acireductone dioxygenase activity</note>
    </ligand>
</feature>
<feature type="binding site" evidence="1">
    <location>
        <position position="74"/>
    </location>
    <ligand>
        <name>Ni(2+)</name>
        <dbReference type="ChEBI" id="CHEBI:49786"/>
        <note>for nickel-dependent acireductone dioxygenase activity</note>
    </ligand>
</feature>
<feature type="binding site" evidence="1">
    <location>
        <position position="76"/>
    </location>
    <ligand>
        <name>Fe(2+)</name>
        <dbReference type="ChEBI" id="CHEBI:29033"/>
        <note>for iron-dependent acireductone dioxygenase activity</note>
    </ligand>
</feature>
<feature type="binding site" evidence="1">
    <location>
        <position position="76"/>
    </location>
    <ligand>
        <name>Ni(2+)</name>
        <dbReference type="ChEBI" id="CHEBI:49786"/>
        <note>for nickel-dependent acireductone dioxygenase activity</note>
    </ligand>
</feature>
<feature type="binding site" evidence="1">
    <location>
        <position position="80"/>
    </location>
    <ligand>
        <name>Fe(2+)</name>
        <dbReference type="ChEBI" id="CHEBI:29033"/>
        <note>for iron-dependent acireductone dioxygenase activity</note>
    </ligand>
</feature>
<feature type="binding site" evidence="1">
    <location>
        <position position="80"/>
    </location>
    <ligand>
        <name>Ni(2+)</name>
        <dbReference type="ChEBI" id="CHEBI:49786"/>
        <note>for nickel-dependent acireductone dioxygenase activity</note>
    </ligand>
</feature>
<feature type="binding site" evidence="1">
    <location>
        <position position="119"/>
    </location>
    <ligand>
        <name>Fe(2+)</name>
        <dbReference type="ChEBI" id="CHEBI:29033"/>
        <note>for iron-dependent acireductone dioxygenase activity</note>
    </ligand>
</feature>
<feature type="binding site" evidence="1">
    <location>
        <position position="119"/>
    </location>
    <ligand>
        <name>Ni(2+)</name>
        <dbReference type="ChEBI" id="CHEBI:49786"/>
        <note>for nickel-dependent acireductone dioxygenase activity</note>
    </ligand>
</feature>
<proteinExistence type="inferred from homology"/>
<protein>
    <recommendedName>
        <fullName evidence="1">Acireductone dioxygenase</fullName>
    </recommendedName>
    <alternativeName>
        <fullName evidence="1">Acireductone dioxygenase (Fe(2+)-requiring)</fullName>
        <shortName evidence="1">ARD'</shortName>
        <shortName evidence="1">Fe-ARD</shortName>
        <ecNumber evidence="1">1.13.11.54</ecNumber>
    </alternativeName>
    <alternativeName>
        <fullName evidence="1">Acireductone dioxygenase (Ni(2+)-requiring)</fullName>
        <shortName evidence="1">ARD</shortName>
        <shortName evidence="1">Ni-ARD</shortName>
        <ecNumber evidence="1">1.13.11.53</ecNumber>
    </alternativeName>
</protein>
<organism>
    <name type="scientific">Dictyostelium discoideum</name>
    <name type="common">Social amoeba</name>
    <dbReference type="NCBI Taxonomy" id="44689"/>
    <lineage>
        <taxon>Eukaryota</taxon>
        <taxon>Amoebozoa</taxon>
        <taxon>Evosea</taxon>
        <taxon>Eumycetozoa</taxon>
        <taxon>Dictyostelia</taxon>
        <taxon>Dictyosteliales</taxon>
        <taxon>Dictyosteliaceae</taxon>
        <taxon>Dictyostelium</taxon>
    </lineage>
</organism>
<reference key="1">
    <citation type="journal article" date="2005" name="Nature">
        <title>The genome of the social amoeba Dictyostelium discoideum.</title>
        <authorList>
            <person name="Eichinger L."/>
            <person name="Pachebat J.A."/>
            <person name="Gloeckner G."/>
            <person name="Rajandream M.A."/>
            <person name="Sucgang R."/>
            <person name="Berriman M."/>
            <person name="Song J."/>
            <person name="Olsen R."/>
            <person name="Szafranski K."/>
            <person name="Xu Q."/>
            <person name="Tunggal B."/>
            <person name="Kummerfeld S."/>
            <person name="Madera M."/>
            <person name="Konfortov B.A."/>
            <person name="Rivero F."/>
            <person name="Bankier A.T."/>
            <person name="Lehmann R."/>
            <person name="Hamlin N."/>
            <person name="Davies R."/>
            <person name="Gaudet P."/>
            <person name="Fey P."/>
            <person name="Pilcher K."/>
            <person name="Chen G."/>
            <person name="Saunders D."/>
            <person name="Sodergren E.J."/>
            <person name="Davis P."/>
            <person name="Kerhornou A."/>
            <person name="Nie X."/>
            <person name="Hall N."/>
            <person name="Anjard C."/>
            <person name="Hemphill L."/>
            <person name="Bason N."/>
            <person name="Farbrother P."/>
            <person name="Desany B."/>
            <person name="Just E."/>
            <person name="Morio T."/>
            <person name="Rost R."/>
            <person name="Churcher C.M."/>
            <person name="Cooper J."/>
            <person name="Haydock S."/>
            <person name="van Driessche N."/>
            <person name="Cronin A."/>
            <person name="Goodhead I."/>
            <person name="Muzny D.M."/>
            <person name="Mourier T."/>
            <person name="Pain A."/>
            <person name="Lu M."/>
            <person name="Harper D."/>
            <person name="Lindsay R."/>
            <person name="Hauser H."/>
            <person name="James K.D."/>
            <person name="Quiles M."/>
            <person name="Madan Babu M."/>
            <person name="Saito T."/>
            <person name="Buchrieser C."/>
            <person name="Wardroper A."/>
            <person name="Felder M."/>
            <person name="Thangavelu M."/>
            <person name="Johnson D."/>
            <person name="Knights A."/>
            <person name="Loulseged H."/>
            <person name="Mungall K.L."/>
            <person name="Oliver K."/>
            <person name="Price C."/>
            <person name="Quail M.A."/>
            <person name="Urushihara H."/>
            <person name="Hernandez J."/>
            <person name="Rabbinowitsch E."/>
            <person name="Steffen D."/>
            <person name="Sanders M."/>
            <person name="Ma J."/>
            <person name="Kohara Y."/>
            <person name="Sharp S."/>
            <person name="Simmonds M.N."/>
            <person name="Spiegler S."/>
            <person name="Tivey A."/>
            <person name="Sugano S."/>
            <person name="White B."/>
            <person name="Walker D."/>
            <person name="Woodward J.R."/>
            <person name="Winckler T."/>
            <person name="Tanaka Y."/>
            <person name="Shaulsky G."/>
            <person name="Schleicher M."/>
            <person name="Weinstock G.M."/>
            <person name="Rosenthal A."/>
            <person name="Cox E.C."/>
            <person name="Chisholm R.L."/>
            <person name="Gibbs R.A."/>
            <person name="Loomis W.F."/>
            <person name="Platzer M."/>
            <person name="Kay R.R."/>
            <person name="Williams J.G."/>
            <person name="Dear P.H."/>
            <person name="Noegel A.A."/>
            <person name="Barrell B.G."/>
            <person name="Kuspa A."/>
        </authorList>
    </citation>
    <scope>NUCLEOTIDE SEQUENCE [LARGE SCALE GENOMIC DNA]</scope>
    <source>
        <strain>AX4</strain>
    </source>
</reference>
<dbReference type="EC" id="1.13.11.54" evidence="1"/>
<dbReference type="EC" id="1.13.11.53" evidence="1"/>
<dbReference type="EMBL" id="AAFI02000177">
    <property type="protein sequence ID" value="EAL61672.1"/>
    <property type="molecule type" value="Genomic_DNA"/>
</dbReference>
<dbReference type="RefSeq" id="XP_635174.1">
    <property type="nucleotide sequence ID" value="XM_630082.1"/>
</dbReference>
<dbReference type="SMR" id="Q54ER6"/>
<dbReference type="FunCoup" id="Q54ER6">
    <property type="interactions" value="351"/>
</dbReference>
<dbReference type="STRING" id="44689.Q54ER6"/>
<dbReference type="PaxDb" id="44689-DDB0230998"/>
<dbReference type="EnsemblProtists" id="EAL61672">
    <property type="protein sequence ID" value="EAL61672"/>
    <property type="gene ID" value="DDB_G0291376"/>
</dbReference>
<dbReference type="GeneID" id="8628120"/>
<dbReference type="KEGG" id="ddi:DDB_G0291376"/>
<dbReference type="dictyBase" id="DDB_G0291376">
    <property type="gene designation" value="adi1"/>
</dbReference>
<dbReference type="VEuPathDB" id="AmoebaDB:DDB_G0291376"/>
<dbReference type="eggNOG" id="KOG2107">
    <property type="taxonomic scope" value="Eukaryota"/>
</dbReference>
<dbReference type="HOGENOM" id="CLU_090154_1_1_1"/>
<dbReference type="InParanoid" id="Q54ER6"/>
<dbReference type="OMA" id="WYMDESQ"/>
<dbReference type="PhylomeDB" id="Q54ER6"/>
<dbReference type="Reactome" id="R-DDI-1237112">
    <property type="pathway name" value="Methionine salvage pathway"/>
</dbReference>
<dbReference type="UniPathway" id="UPA00904">
    <property type="reaction ID" value="UER00878"/>
</dbReference>
<dbReference type="PRO" id="PR:Q54ER6"/>
<dbReference type="Proteomes" id="UP000002195">
    <property type="component" value="Chromosome 6"/>
</dbReference>
<dbReference type="GO" id="GO:0005737">
    <property type="term" value="C:cytoplasm"/>
    <property type="evidence" value="ECO:0000250"/>
    <property type="project" value="dictyBase"/>
</dbReference>
<dbReference type="GO" id="GO:0005634">
    <property type="term" value="C:nucleus"/>
    <property type="evidence" value="ECO:0000250"/>
    <property type="project" value="dictyBase"/>
</dbReference>
<dbReference type="GO" id="GO:0010308">
    <property type="term" value="F:acireductone dioxygenase (Ni2+-requiring) activity"/>
    <property type="evidence" value="ECO:0007669"/>
    <property type="project" value="UniProtKB-UniRule"/>
</dbReference>
<dbReference type="GO" id="GO:0010309">
    <property type="term" value="F:acireductone dioxygenase [iron(II)-requiring] activity"/>
    <property type="evidence" value="ECO:0000318"/>
    <property type="project" value="GO_Central"/>
</dbReference>
<dbReference type="GO" id="GO:0005506">
    <property type="term" value="F:iron ion binding"/>
    <property type="evidence" value="ECO:0007669"/>
    <property type="project" value="UniProtKB-UniRule"/>
</dbReference>
<dbReference type="GO" id="GO:0016151">
    <property type="term" value="F:nickel cation binding"/>
    <property type="evidence" value="ECO:0007669"/>
    <property type="project" value="UniProtKB-UniRule"/>
</dbReference>
<dbReference type="GO" id="GO:0016491">
    <property type="term" value="F:oxidoreductase activity"/>
    <property type="evidence" value="ECO:0000250"/>
    <property type="project" value="dictyBase"/>
</dbReference>
<dbReference type="GO" id="GO:0019509">
    <property type="term" value="P:L-methionine salvage from methylthioadenosine"/>
    <property type="evidence" value="ECO:0000250"/>
    <property type="project" value="dictyBase"/>
</dbReference>
<dbReference type="GO" id="GO:0006555">
    <property type="term" value="P:methionine metabolic process"/>
    <property type="evidence" value="ECO:0000318"/>
    <property type="project" value="GO_Central"/>
</dbReference>
<dbReference type="CDD" id="cd02232">
    <property type="entry name" value="cupin_ARD"/>
    <property type="match status" value="1"/>
</dbReference>
<dbReference type="FunFam" id="2.60.120.10:FF:000099">
    <property type="entry name" value="1,2-dihydroxy-3-keto-5-methylthiopentene dioxygenase"/>
    <property type="match status" value="1"/>
</dbReference>
<dbReference type="Gene3D" id="2.60.120.10">
    <property type="entry name" value="Jelly Rolls"/>
    <property type="match status" value="1"/>
</dbReference>
<dbReference type="HAMAP" id="MF_03154">
    <property type="entry name" value="Salvage_MtnD_euk"/>
    <property type="match status" value="1"/>
</dbReference>
<dbReference type="InterPro" id="IPR004313">
    <property type="entry name" value="ARD"/>
</dbReference>
<dbReference type="InterPro" id="IPR027496">
    <property type="entry name" value="ARD_euk"/>
</dbReference>
<dbReference type="InterPro" id="IPR014710">
    <property type="entry name" value="RmlC-like_jellyroll"/>
</dbReference>
<dbReference type="InterPro" id="IPR011051">
    <property type="entry name" value="RmlC_Cupin_sf"/>
</dbReference>
<dbReference type="PANTHER" id="PTHR23418">
    <property type="entry name" value="ACIREDUCTONE DIOXYGENASE"/>
    <property type="match status" value="1"/>
</dbReference>
<dbReference type="PANTHER" id="PTHR23418:SF0">
    <property type="entry name" value="ACIREDUCTONE DIOXYGENASE"/>
    <property type="match status" value="1"/>
</dbReference>
<dbReference type="Pfam" id="PF03079">
    <property type="entry name" value="ARD"/>
    <property type="match status" value="1"/>
</dbReference>
<dbReference type="SUPFAM" id="SSF51182">
    <property type="entry name" value="RmlC-like cupins"/>
    <property type="match status" value="1"/>
</dbReference>